<proteinExistence type="inferred from homology"/>
<comment type="function">
    <text evidence="1">Involved in the biosynthesis of the central metabolite phospho-alpha-D-ribosyl-1-pyrophosphate (PRPP) via the transfer of pyrophosphoryl group from ATP to 1-hydroxyl of ribose-5-phosphate (Rib-5-P).</text>
</comment>
<comment type="catalytic activity">
    <reaction evidence="1">
        <text>D-ribose 5-phosphate + ATP = 5-phospho-alpha-D-ribose 1-diphosphate + AMP + H(+)</text>
        <dbReference type="Rhea" id="RHEA:15609"/>
        <dbReference type="ChEBI" id="CHEBI:15378"/>
        <dbReference type="ChEBI" id="CHEBI:30616"/>
        <dbReference type="ChEBI" id="CHEBI:58017"/>
        <dbReference type="ChEBI" id="CHEBI:78346"/>
        <dbReference type="ChEBI" id="CHEBI:456215"/>
        <dbReference type="EC" id="2.7.6.1"/>
    </reaction>
</comment>
<comment type="cofactor">
    <cofactor evidence="1">
        <name>Mg(2+)</name>
        <dbReference type="ChEBI" id="CHEBI:18420"/>
    </cofactor>
    <text evidence="1">Binds 2 Mg(2+) ions per subunit.</text>
</comment>
<comment type="pathway">
    <text evidence="1">Metabolic intermediate biosynthesis; 5-phospho-alpha-D-ribose 1-diphosphate biosynthesis; 5-phospho-alpha-D-ribose 1-diphosphate from D-ribose 5-phosphate (route I): step 1/1.</text>
</comment>
<comment type="subunit">
    <text evidence="1">Homohexamer.</text>
</comment>
<comment type="subcellular location">
    <subcellularLocation>
        <location evidence="1">Cytoplasm</location>
    </subcellularLocation>
</comment>
<comment type="similarity">
    <text evidence="1">Belongs to the ribose-phosphate pyrophosphokinase family. Class I subfamily.</text>
</comment>
<gene>
    <name evidence="1" type="primary">prs</name>
</gene>
<dbReference type="EC" id="2.7.6.1" evidence="1"/>
<dbReference type="EMBL" id="X83708">
    <property type="protein sequence ID" value="CAA58682.1"/>
    <property type="molecule type" value="Genomic_DNA"/>
</dbReference>
<dbReference type="PIR" id="JC5093">
    <property type="entry name" value="JC5093"/>
</dbReference>
<dbReference type="SMR" id="P42816"/>
<dbReference type="UniPathway" id="UPA00087">
    <property type="reaction ID" value="UER00172"/>
</dbReference>
<dbReference type="GO" id="GO:0005737">
    <property type="term" value="C:cytoplasm"/>
    <property type="evidence" value="ECO:0007669"/>
    <property type="project" value="UniProtKB-SubCell"/>
</dbReference>
<dbReference type="GO" id="GO:0002189">
    <property type="term" value="C:ribose phosphate diphosphokinase complex"/>
    <property type="evidence" value="ECO:0007669"/>
    <property type="project" value="TreeGrafter"/>
</dbReference>
<dbReference type="GO" id="GO:0005524">
    <property type="term" value="F:ATP binding"/>
    <property type="evidence" value="ECO:0007669"/>
    <property type="project" value="UniProtKB-KW"/>
</dbReference>
<dbReference type="GO" id="GO:0016301">
    <property type="term" value="F:kinase activity"/>
    <property type="evidence" value="ECO:0007669"/>
    <property type="project" value="UniProtKB-KW"/>
</dbReference>
<dbReference type="GO" id="GO:0000287">
    <property type="term" value="F:magnesium ion binding"/>
    <property type="evidence" value="ECO:0007669"/>
    <property type="project" value="UniProtKB-UniRule"/>
</dbReference>
<dbReference type="GO" id="GO:0004749">
    <property type="term" value="F:ribose phosphate diphosphokinase activity"/>
    <property type="evidence" value="ECO:0007669"/>
    <property type="project" value="UniProtKB-UniRule"/>
</dbReference>
<dbReference type="GO" id="GO:0006015">
    <property type="term" value="P:5-phosphoribose 1-diphosphate biosynthetic process"/>
    <property type="evidence" value="ECO:0007669"/>
    <property type="project" value="UniProtKB-UniRule"/>
</dbReference>
<dbReference type="GO" id="GO:0006164">
    <property type="term" value="P:purine nucleotide biosynthetic process"/>
    <property type="evidence" value="ECO:0007669"/>
    <property type="project" value="TreeGrafter"/>
</dbReference>
<dbReference type="GO" id="GO:0009156">
    <property type="term" value="P:ribonucleoside monophosphate biosynthetic process"/>
    <property type="evidence" value="ECO:0007669"/>
    <property type="project" value="InterPro"/>
</dbReference>
<dbReference type="CDD" id="cd06223">
    <property type="entry name" value="PRTases_typeI"/>
    <property type="match status" value="1"/>
</dbReference>
<dbReference type="FunFam" id="3.40.50.2020:FF:000001">
    <property type="entry name" value="Ribose-phosphate pyrophosphokinase"/>
    <property type="match status" value="1"/>
</dbReference>
<dbReference type="Gene3D" id="3.40.50.2020">
    <property type="match status" value="2"/>
</dbReference>
<dbReference type="HAMAP" id="MF_00583_B">
    <property type="entry name" value="RibP_PPkinase_B"/>
    <property type="match status" value="1"/>
</dbReference>
<dbReference type="InterPro" id="IPR000842">
    <property type="entry name" value="PRib_PP_synth_CS"/>
</dbReference>
<dbReference type="InterPro" id="IPR029099">
    <property type="entry name" value="Pribosyltran_N"/>
</dbReference>
<dbReference type="InterPro" id="IPR000836">
    <property type="entry name" value="PRibTrfase_dom"/>
</dbReference>
<dbReference type="InterPro" id="IPR029057">
    <property type="entry name" value="PRTase-like"/>
</dbReference>
<dbReference type="InterPro" id="IPR005946">
    <property type="entry name" value="Rib-P_diPkinase"/>
</dbReference>
<dbReference type="InterPro" id="IPR037515">
    <property type="entry name" value="Rib-P_diPkinase_bac"/>
</dbReference>
<dbReference type="NCBIfam" id="NF002320">
    <property type="entry name" value="PRK01259.1"/>
    <property type="match status" value="1"/>
</dbReference>
<dbReference type="NCBIfam" id="NF002618">
    <property type="entry name" value="PRK02269.1"/>
    <property type="match status" value="1"/>
</dbReference>
<dbReference type="NCBIfam" id="TIGR01251">
    <property type="entry name" value="ribP_PPkin"/>
    <property type="match status" value="1"/>
</dbReference>
<dbReference type="PANTHER" id="PTHR10210">
    <property type="entry name" value="RIBOSE-PHOSPHATE DIPHOSPHOKINASE FAMILY MEMBER"/>
    <property type="match status" value="1"/>
</dbReference>
<dbReference type="PANTHER" id="PTHR10210:SF41">
    <property type="entry name" value="RIBOSE-PHOSPHATE PYROPHOSPHOKINASE 1, CHLOROPLASTIC"/>
    <property type="match status" value="1"/>
</dbReference>
<dbReference type="Pfam" id="PF14572">
    <property type="entry name" value="Pribosyl_synth"/>
    <property type="match status" value="1"/>
</dbReference>
<dbReference type="Pfam" id="PF13793">
    <property type="entry name" value="Pribosyltran_N"/>
    <property type="match status" value="1"/>
</dbReference>
<dbReference type="SMART" id="SM01400">
    <property type="entry name" value="Pribosyltran_N"/>
    <property type="match status" value="1"/>
</dbReference>
<dbReference type="SUPFAM" id="SSF53271">
    <property type="entry name" value="PRTase-like"/>
    <property type="match status" value="1"/>
</dbReference>
<dbReference type="PROSITE" id="PS00114">
    <property type="entry name" value="PRPP_SYNTHASE"/>
    <property type="match status" value="1"/>
</dbReference>
<organism>
    <name type="scientific">Bacillus caldolyticus</name>
    <dbReference type="NCBI Taxonomy" id="1394"/>
    <lineage>
        <taxon>Bacteria</taxon>
        <taxon>Bacillati</taxon>
        <taxon>Bacillota</taxon>
        <taxon>Bacilli</taxon>
        <taxon>Bacillales</taxon>
        <taxon>Anoxybacillaceae</taxon>
        <taxon>Geobacillus</taxon>
        <taxon>Geobacillus thermoleovorans group</taxon>
    </lineage>
</organism>
<name>KPRS_BACCL</name>
<reference key="1">
    <citation type="journal article" date="1996" name="Gene">
        <title>Bacillus caldolyticus prs gene encoding phosphoribosyl-diphosphate synthase.</title>
        <authorList>
            <person name="Krath B.N."/>
            <person name="Hove-Jensen B."/>
        </authorList>
    </citation>
    <scope>NUCLEOTIDE SEQUENCE [GENOMIC DNA]</scope>
    <source>
        <strain>DSM 405 / NBRC 15313 / YP-T</strain>
    </source>
</reference>
<keyword id="KW-0067">ATP-binding</keyword>
<keyword id="KW-0963">Cytoplasm</keyword>
<keyword id="KW-0418">Kinase</keyword>
<keyword id="KW-0460">Magnesium</keyword>
<keyword id="KW-0479">Metal-binding</keyword>
<keyword id="KW-0545">Nucleotide biosynthesis</keyword>
<keyword id="KW-0547">Nucleotide-binding</keyword>
<keyword id="KW-0808">Transferase</keyword>
<feature type="chain" id="PRO_0000141107" description="Ribose-phosphate pyrophosphokinase">
    <location>
        <begin position="1"/>
        <end position="315"/>
    </location>
</feature>
<feature type="active site" evidence="1">
    <location>
        <position position="196"/>
    </location>
</feature>
<feature type="binding site" evidence="1">
    <location>
        <begin position="41"/>
        <end position="43"/>
    </location>
    <ligand>
        <name>ATP</name>
        <dbReference type="ChEBI" id="CHEBI:30616"/>
    </ligand>
</feature>
<feature type="binding site" evidence="1">
    <location>
        <begin position="100"/>
        <end position="101"/>
    </location>
    <ligand>
        <name>ATP</name>
        <dbReference type="ChEBI" id="CHEBI:30616"/>
    </ligand>
</feature>
<feature type="binding site" evidence="1">
    <location>
        <position position="134"/>
    </location>
    <ligand>
        <name>Mg(2+)</name>
        <dbReference type="ChEBI" id="CHEBI:18420"/>
        <label>1</label>
    </ligand>
</feature>
<feature type="binding site" evidence="1">
    <location>
        <position position="173"/>
    </location>
    <ligand>
        <name>Mg(2+)</name>
        <dbReference type="ChEBI" id="CHEBI:18420"/>
        <label>2</label>
    </ligand>
</feature>
<feature type="binding site" evidence="1">
    <location>
        <position position="198"/>
    </location>
    <ligand>
        <name>D-ribose 5-phosphate</name>
        <dbReference type="ChEBI" id="CHEBI:78346"/>
    </ligand>
</feature>
<feature type="binding site" evidence="1">
    <location>
        <position position="222"/>
    </location>
    <ligand>
        <name>D-ribose 5-phosphate</name>
        <dbReference type="ChEBI" id="CHEBI:78346"/>
    </ligand>
</feature>
<feature type="binding site" evidence="1">
    <location>
        <begin position="226"/>
        <end position="230"/>
    </location>
    <ligand>
        <name>D-ribose 5-phosphate</name>
        <dbReference type="ChEBI" id="CHEBI:78346"/>
    </ligand>
</feature>
<accession>P42816</accession>
<evidence type="ECO:0000255" key="1">
    <source>
        <dbReference type="HAMAP-Rule" id="MF_00583"/>
    </source>
</evidence>
<protein>
    <recommendedName>
        <fullName evidence="1">Ribose-phosphate pyrophosphokinase</fullName>
        <shortName evidence="1">RPPK</shortName>
        <ecNumber evidence="1">2.7.6.1</ecNumber>
    </recommendedName>
    <alternativeName>
        <fullName evidence="1">5-phospho-D-ribosyl alpha-1-diphosphate synthase</fullName>
    </alternativeName>
    <alternativeName>
        <fullName evidence="1">Phosphoribosyl diphosphate synthase</fullName>
    </alternativeName>
    <alternativeName>
        <fullName evidence="1">Phosphoribosyl pyrophosphate synthase</fullName>
        <shortName evidence="1">P-Rib-PP synthase</shortName>
        <shortName evidence="1">PRPP synthase</shortName>
        <shortName evidence="1">PRPPase</shortName>
    </alternativeName>
</protein>
<sequence length="315" mass="34533">MSDCQHQLKLFALNSNMKLAKEIAEVMGIELGKCSVSRFSDGEIQINIEESIRGDDVFVIQSTSVPVNEHLMELLIMIDALKRASARTINIVMPYYGYARQDRKARSRNPITAKLVANLLETAGASRVITLDLHAPQIQGFFDIPIDHLMGVPILADYFKSKQLEDIVVVSPDHGGVTRARKLADRLKAPIAIIDKRRPKPNVAEVMNIVGQVAGKTAILIDDIIDTAGTITLAANALAESGAKEVYACCTHPVLSGPAIERIQSSKIKELVVTNSIALPEEKKIDKIVKLSVRPLIAEAITRVYEMKSVSVLFD</sequence>